<evidence type="ECO:0000255" key="1">
    <source>
        <dbReference type="HAMAP-Rule" id="MF_00274"/>
    </source>
</evidence>
<name>Y200_CAMHC</name>
<reference key="1">
    <citation type="submission" date="2007-07" db="EMBL/GenBank/DDBJ databases">
        <title>Complete genome sequence of Campylobacter hominis ATCC BAA-381, a commensal isolated from the human gastrointestinal tract.</title>
        <authorList>
            <person name="Fouts D.E."/>
            <person name="Mongodin E.F."/>
            <person name="Puiu D."/>
            <person name="Sebastian Y."/>
            <person name="Miller W.G."/>
            <person name="Mandrell R.E."/>
            <person name="Nelson K.E."/>
        </authorList>
    </citation>
    <scope>NUCLEOTIDE SEQUENCE [LARGE SCALE GENOMIC DNA]</scope>
    <source>
        <strain>ATCC BAA-381 / DSM 21671 / CCUG 45161 / LMG 19568 / NCTC 13146 / CH001A</strain>
    </source>
</reference>
<organism>
    <name type="scientific">Campylobacter hominis (strain ATCC BAA-381 / DSM 21671 / CCUG 45161 / LMG 19568 / NCTC 13146 / CH001A)</name>
    <dbReference type="NCBI Taxonomy" id="360107"/>
    <lineage>
        <taxon>Bacteria</taxon>
        <taxon>Pseudomonadati</taxon>
        <taxon>Campylobacterota</taxon>
        <taxon>Epsilonproteobacteria</taxon>
        <taxon>Campylobacterales</taxon>
        <taxon>Campylobacteraceae</taxon>
        <taxon>Campylobacter</taxon>
    </lineage>
</organism>
<protein>
    <recommendedName>
        <fullName evidence="1">Nucleoid-associated protein CHAB381_0200</fullName>
    </recommendedName>
</protein>
<gene>
    <name type="ordered locus">CHAB381_0200</name>
</gene>
<comment type="function">
    <text evidence="1">Binds to DNA and alters its conformation. May be involved in regulation of gene expression, nucleoid organization and DNA protection.</text>
</comment>
<comment type="subunit">
    <text evidence="1">Homodimer.</text>
</comment>
<comment type="subcellular location">
    <subcellularLocation>
        <location evidence="1">Cytoplasm</location>
        <location evidence="1">Nucleoid</location>
    </subcellularLocation>
</comment>
<comment type="similarity">
    <text evidence="1">Belongs to the YbaB/EbfC family.</text>
</comment>
<dbReference type="EMBL" id="CP000776">
    <property type="protein sequence ID" value="ABS52542.1"/>
    <property type="molecule type" value="Genomic_DNA"/>
</dbReference>
<dbReference type="RefSeq" id="WP_012108089.1">
    <property type="nucleotide sequence ID" value="NC_009714.1"/>
</dbReference>
<dbReference type="SMR" id="A7HZW7"/>
<dbReference type="STRING" id="360107.CHAB381_0200"/>
<dbReference type="KEGG" id="cha:CHAB381_0200"/>
<dbReference type="eggNOG" id="COG0718">
    <property type="taxonomic scope" value="Bacteria"/>
</dbReference>
<dbReference type="HOGENOM" id="CLU_140930_2_1_7"/>
<dbReference type="OrthoDB" id="5343857at2"/>
<dbReference type="Proteomes" id="UP000002407">
    <property type="component" value="Chromosome"/>
</dbReference>
<dbReference type="GO" id="GO:0043590">
    <property type="term" value="C:bacterial nucleoid"/>
    <property type="evidence" value="ECO:0007669"/>
    <property type="project" value="UniProtKB-UniRule"/>
</dbReference>
<dbReference type="GO" id="GO:0005829">
    <property type="term" value="C:cytosol"/>
    <property type="evidence" value="ECO:0007669"/>
    <property type="project" value="TreeGrafter"/>
</dbReference>
<dbReference type="GO" id="GO:0003677">
    <property type="term" value="F:DNA binding"/>
    <property type="evidence" value="ECO:0007669"/>
    <property type="project" value="UniProtKB-UniRule"/>
</dbReference>
<dbReference type="Gene3D" id="3.30.1310.10">
    <property type="entry name" value="Nucleoid-associated protein YbaB-like domain"/>
    <property type="match status" value="1"/>
</dbReference>
<dbReference type="HAMAP" id="MF_00274">
    <property type="entry name" value="DNA_YbaB_EbfC"/>
    <property type="match status" value="1"/>
</dbReference>
<dbReference type="InterPro" id="IPR036894">
    <property type="entry name" value="YbaB-like_sf"/>
</dbReference>
<dbReference type="InterPro" id="IPR004401">
    <property type="entry name" value="YbaB/EbfC"/>
</dbReference>
<dbReference type="NCBIfam" id="TIGR00103">
    <property type="entry name" value="DNA_YbaB_EbfC"/>
    <property type="match status" value="1"/>
</dbReference>
<dbReference type="PANTHER" id="PTHR33449">
    <property type="entry name" value="NUCLEOID-ASSOCIATED PROTEIN YBAB"/>
    <property type="match status" value="1"/>
</dbReference>
<dbReference type="PANTHER" id="PTHR33449:SF1">
    <property type="entry name" value="NUCLEOID-ASSOCIATED PROTEIN YBAB"/>
    <property type="match status" value="1"/>
</dbReference>
<dbReference type="Pfam" id="PF02575">
    <property type="entry name" value="YbaB_DNA_bd"/>
    <property type="match status" value="1"/>
</dbReference>
<dbReference type="PIRSF" id="PIRSF004555">
    <property type="entry name" value="UCP004555"/>
    <property type="match status" value="1"/>
</dbReference>
<dbReference type="SUPFAM" id="SSF82607">
    <property type="entry name" value="YbaB-like"/>
    <property type="match status" value="1"/>
</dbReference>
<keyword id="KW-0963">Cytoplasm</keyword>
<keyword id="KW-0238">DNA-binding</keyword>
<keyword id="KW-1185">Reference proteome</keyword>
<proteinExistence type="inferred from homology"/>
<accession>A7HZW7</accession>
<sequence length="108" mass="11728">MFEGFDLSKMNEMLGDLQKKAQQMENENANREFSVKSGAGMVEIKISGKGEVLDVSIDDSLMSDKDSLQILLISAINDAVKLIDNEKKNLAAKMLGDIGNLGGFGCEK</sequence>
<feature type="chain" id="PRO_1000003718" description="Nucleoid-associated protein CHAB381_0200">
    <location>
        <begin position="1"/>
        <end position="108"/>
    </location>
</feature>